<reference key="1">
    <citation type="submission" date="2009-02" db="EMBL/GenBank/DDBJ databases">
        <title>Genome sequence of Bacillus cereus 03BB102.</title>
        <authorList>
            <person name="Dodson R.J."/>
            <person name="Jackson P."/>
            <person name="Munk A.C."/>
            <person name="Brettin T."/>
            <person name="Bruce D."/>
            <person name="Detter C."/>
            <person name="Tapia R."/>
            <person name="Han C."/>
            <person name="Sutton G."/>
            <person name="Sims D."/>
        </authorList>
    </citation>
    <scope>NUCLEOTIDE SEQUENCE [LARGE SCALE GENOMIC DNA]</scope>
    <source>
        <strain>03BB102</strain>
    </source>
</reference>
<sequence>MSIQSILRKETLKKKDKNIDLQENNINDLVVSASRVIAPLWPISTFAAHHPWMGLEKQSFERVANWLKEARNVDIYPSASMIHSAKAKGEIEESFLQMALSRWLDSQSFHIPRKKVEQFCQAALKLEELPSSLLSSPQLNKLAEEMSYINTESMKDSFLQPVSSFIENQKGENLSDILNYHIIKWCKLYLDDSGSSWTMPNREQGLYRAWHHLIKFDPALSKTERKVLKDWPEDALIALTKALSELGISESNMQAYLEGHLLSLPGWAGMVRWRSQQSIEEQELLIEYLAVRLSMELAVVKPYLPLKNQKVEKKVSIVPLIASWIYWGDISTREWLQMSATEQSELLAFAYRFDENIRKKLWLEAWEQTHAEQLKKKISSKQRATNDKKRVVAQLAFCIDVRSEPFRRHLEKLGPFETFGIAGFFGLPIATTELGSNDSHPSLPVILKPKHQIKELTDENECKSYEQRKMVGSSVRYTFKTMKQNVLTSMLLPEVSGPLLGLQMVTRSFVPRRVGGFIRNLRKNMLQKPDTTFSLNHVHDTNCEIPIGFTKEEKVNYVRQALKMVGLTEGFAPLVVMCGHSSQSTNNPYAAALECGACGGAAGGFNARVFATLCNLPEVREALSAEGIKIPDDTIFAAAEHKTTVDELEWIYVPELSETAQEAFDCIEAIMPNVSQHANRERLMQLPNFKTKIKNPSKEAHRFAEDWSEIRPEWGLARNASFIIGQRELTQDCDLEGRAFLHNYDWKQDERGDILANIIAGPGTVAQWINLQYYASTVAPHYYGSGNKTTQTVTAGLGVMQGNASDLLPGLPWQSVMQSDRETYHSPLRLLIVIQAPTKYIEHLLNNDFTFREKVQNGWVRLASVDPEGRWKNW</sequence>
<dbReference type="EMBL" id="CP001407">
    <property type="protein sequence ID" value="ACO29595.1"/>
    <property type="molecule type" value="Genomic_DNA"/>
</dbReference>
<dbReference type="RefSeq" id="WP_000027412.1">
    <property type="nucleotide sequence ID" value="NC_012472.1"/>
</dbReference>
<dbReference type="SMR" id="C1F088"/>
<dbReference type="KEGG" id="bcx:BCA_3214"/>
<dbReference type="PATRIC" id="fig|572264.18.peg.3172"/>
<dbReference type="Proteomes" id="UP000002210">
    <property type="component" value="Chromosome"/>
</dbReference>
<dbReference type="GO" id="GO:0005886">
    <property type="term" value="C:plasma membrane"/>
    <property type="evidence" value="ECO:0007669"/>
    <property type="project" value="UniProtKB-SubCell"/>
</dbReference>
<dbReference type="GO" id="GO:0008270">
    <property type="term" value="F:zinc ion binding"/>
    <property type="evidence" value="ECO:0007669"/>
    <property type="project" value="UniProtKB-UniRule"/>
</dbReference>
<dbReference type="HAMAP" id="MF_01871">
    <property type="entry name" value="DabA"/>
    <property type="match status" value="1"/>
</dbReference>
<dbReference type="InterPro" id="IPR018752">
    <property type="entry name" value="DabA"/>
</dbReference>
<dbReference type="PANTHER" id="PTHR38344:SF1">
    <property type="entry name" value="INORGANIC CARBON TRANSPORTER SUBUNIT DABA-RELATED"/>
    <property type="match status" value="1"/>
</dbReference>
<dbReference type="PANTHER" id="PTHR38344">
    <property type="entry name" value="UPF0753 PROTEIN AQ_863"/>
    <property type="match status" value="1"/>
</dbReference>
<dbReference type="Pfam" id="PF10070">
    <property type="entry name" value="DabA"/>
    <property type="match status" value="1"/>
</dbReference>
<accession>C1F088</accession>
<evidence type="ECO:0000255" key="1">
    <source>
        <dbReference type="HAMAP-Rule" id="MF_01871"/>
    </source>
</evidence>
<organism>
    <name type="scientific">Bacillus cereus (strain 03BB102)</name>
    <dbReference type="NCBI Taxonomy" id="572264"/>
    <lineage>
        <taxon>Bacteria</taxon>
        <taxon>Bacillati</taxon>
        <taxon>Bacillota</taxon>
        <taxon>Bacilli</taxon>
        <taxon>Bacillales</taxon>
        <taxon>Bacillaceae</taxon>
        <taxon>Bacillus</taxon>
        <taxon>Bacillus cereus group</taxon>
    </lineage>
</organism>
<keyword id="KW-1003">Cell membrane</keyword>
<keyword id="KW-0472">Membrane</keyword>
<keyword id="KW-0479">Metal-binding</keyword>
<keyword id="KW-0813">Transport</keyword>
<keyword id="KW-0862">Zinc</keyword>
<name>DABA_BACC3</name>
<comment type="function">
    <text evidence="1">Part of an energy-coupled inorganic carbon pump.</text>
</comment>
<comment type="cofactor">
    <cofactor evidence="1">
        <name>Zn(2+)</name>
        <dbReference type="ChEBI" id="CHEBI:29105"/>
    </cofactor>
</comment>
<comment type="subunit">
    <text evidence="1">Forms a complex with DabB.</text>
</comment>
<comment type="subcellular location">
    <subcellularLocation>
        <location evidence="1">Cell membrane</location>
        <topology evidence="1">Peripheral membrane protein</topology>
    </subcellularLocation>
</comment>
<comment type="similarity">
    <text evidence="1">Belongs to the inorganic carbon transporter (TC 9.A.2) DabA family.</text>
</comment>
<protein>
    <recommendedName>
        <fullName evidence="1">Probable inorganic carbon transporter subunit DabA</fullName>
    </recommendedName>
</protein>
<proteinExistence type="inferred from homology"/>
<gene>
    <name evidence="1" type="primary">dabA</name>
    <name type="ordered locus">BCA_3214</name>
</gene>
<feature type="chain" id="PRO_0000387237" description="Probable inorganic carbon transporter subunit DabA">
    <location>
        <begin position="1"/>
        <end position="874"/>
    </location>
</feature>
<feature type="binding site" evidence="1">
    <location>
        <position position="398"/>
    </location>
    <ligand>
        <name>Zn(2+)</name>
        <dbReference type="ChEBI" id="CHEBI:29105"/>
    </ligand>
</feature>
<feature type="binding site" evidence="1">
    <location>
        <position position="400"/>
    </location>
    <ligand>
        <name>Zn(2+)</name>
        <dbReference type="ChEBI" id="CHEBI:29105"/>
    </ligand>
</feature>
<feature type="binding site" evidence="1">
    <location>
        <position position="580"/>
    </location>
    <ligand>
        <name>Zn(2+)</name>
        <dbReference type="ChEBI" id="CHEBI:29105"/>
    </ligand>
</feature>
<feature type="binding site" evidence="1">
    <location>
        <position position="595"/>
    </location>
    <ligand>
        <name>Zn(2+)</name>
        <dbReference type="ChEBI" id="CHEBI:29105"/>
    </ligand>
</feature>